<organism>
    <name type="scientific">Thermosynechococcus vestitus (strain NIES-2133 / IAM M-273 / BP-1)</name>
    <dbReference type="NCBI Taxonomy" id="197221"/>
    <lineage>
        <taxon>Bacteria</taxon>
        <taxon>Bacillati</taxon>
        <taxon>Cyanobacteriota</taxon>
        <taxon>Cyanophyceae</taxon>
        <taxon>Acaryochloridales</taxon>
        <taxon>Thermosynechococcaceae</taxon>
        <taxon>Thermosynechococcus</taxon>
    </lineage>
</organism>
<keyword id="KW-0030">Aminoacyl-tRNA synthetase</keyword>
<keyword id="KW-0067">ATP-binding</keyword>
<keyword id="KW-0963">Cytoplasm</keyword>
<keyword id="KW-0436">Ligase</keyword>
<keyword id="KW-0460">Magnesium</keyword>
<keyword id="KW-0479">Metal-binding</keyword>
<keyword id="KW-0547">Nucleotide-binding</keyword>
<keyword id="KW-0648">Protein biosynthesis</keyword>
<keyword id="KW-1185">Reference proteome</keyword>
<comment type="catalytic activity">
    <reaction evidence="1">
        <text>tRNA(Lys) + L-lysine + ATP = L-lysyl-tRNA(Lys) + AMP + diphosphate</text>
        <dbReference type="Rhea" id="RHEA:20792"/>
        <dbReference type="Rhea" id="RHEA-COMP:9696"/>
        <dbReference type="Rhea" id="RHEA-COMP:9697"/>
        <dbReference type="ChEBI" id="CHEBI:30616"/>
        <dbReference type="ChEBI" id="CHEBI:32551"/>
        <dbReference type="ChEBI" id="CHEBI:33019"/>
        <dbReference type="ChEBI" id="CHEBI:78442"/>
        <dbReference type="ChEBI" id="CHEBI:78529"/>
        <dbReference type="ChEBI" id="CHEBI:456215"/>
        <dbReference type="EC" id="6.1.1.6"/>
    </reaction>
</comment>
<comment type="cofactor">
    <cofactor evidence="1">
        <name>Mg(2+)</name>
        <dbReference type="ChEBI" id="CHEBI:18420"/>
    </cofactor>
    <text evidence="1">Binds 3 Mg(2+) ions per subunit.</text>
</comment>
<comment type="subunit">
    <text evidence="1">Homodimer.</text>
</comment>
<comment type="subcellular location">
    <subcellularLocation>
        <location evidence="1">Cytoplasm</location>
    </subcellularLocation>
</comment>
<comment type="similarity">
    <text evidence="1">Belongs to the class-II aminoacyl-tRNA synthetase family.</text>
</comment>
<dbReference type="EC" id="6.1.1.6" evidence="1"/>
<dbReference type="EMBL" id="BA000039">
    <property type="protein sequence ID" value="BAC07765.1"/>
    <property type="molecule type" value="Genomic_DNA"/>
</dbReference>
<dbReference type="RefSeq" id="NP_681003.1">
    <property type="nucleotide sequence ID" value="NC_004113.1"/>
</dbReference>
<dbReference type="RefSeq" id="WP_011056067.1">
    <property type="nucleotide sequence ID" value="NC_004113.1"/>
</dbReference>
<dbReference type="SMR" id="Q8DMA9"/>
<dbReference type="STRING" id="197221.gene:10746793"/>
<dbReference type="EnsemblBacteria" id="BAC07765">
    <property type="protein sequence ID" value="BAC07765"/>
    <property type="gene ID" value="BAC07765"/>
</dbReference>
<dbReference type="KEGG" id="tel:tll0212"/>
<dbReference type="PATRIC" id="fig|197221.4.peg.218"/>
<dbReference type="eggNOG" id="COG1190">
    <property type="taxonomic scope" value="Bacteria"/>
</dbReference>
<dbReference type="Proteomes" id="UP000000440">
    <property type="component" value="Chromosome"/>
</dbReference>
<dbReference type="GO" id="GO:0005829">
    <property type="term" value="C:cytosol"/>
    <property type="evidence" value="ECO:0007669"/>
    <property type="project" value="TreeGrafter"/>
</dbReference>
<dbReference type="GO" id="GO:0005524">
    <property type="term" value="F:ATP binding"/>
    <property type="evidence" value="ECO:0007669"/>
    <property type="project" value="UniProtKB-UniRule"/>
</dbReference>
<dbReference type="GO" id="GO:0004824">
    <property type="term" value="F:lysine-tRNA ligase activity"/>
    <property type="evidence" value="ECO:0007669"/>
    <property type="project" value="UniProtKB-UniRule"/>
</dbReference>
<dbReference type="GO" id="GO:0000287">
    <property type="term" value="F:magnesium ion binding"/>
    <property type="evidence" value="ECO:0007669"/>
    <property type="project" value="UniProtKB-UniRule"/>
</dbReference>
<dbReference type="GO" id="GO:0000049">
    <property type="term" value="F:tRNA binding"/>
    <property type="evidence" value="ECO:0007669"/>
    <property type="project" value="TreeGrafter"/>
</dbReference>
<dbReference type="GO" id="GO:0006430">
    <property type="term" value="P:lysyl-tRNA aminoacylation"/>
    <property type="evidence" value="ECO:0007669"/>
    <property type="project" value="UniProtKB-UniRule"/>
</dbReference>
<dbReference type="CDD" id="cd00775">
    <property type="entry name" value="LysRS_core"/>
    <property type="match status" value="1"/>
</dbReference>
<dbReference type="CDD" id="cd04322">
    <property type="entry name" value="LysRS_N"/>
    <property type="match status" value="1"/>
</dbReference>
<dbReference type="FunFam" id="2.40.50.140:FF:000024">
    <property type="entry name" value="Lysine--tRNA ligase"/>
    <property type="match status" value="1"/>
</dbReference>
<dbReference type="FunFam" id="3.30.930.10:FF:000067">
    <property type="entry name" value="Lysine--tRNA ligase"/>
    <property type="match status" value="1"/>
</dbReference>
<dbReference type="Gene3D" id="3.30.930.10">
    <property type="entry name" value="Bira Bifunctional Protein, Domain 2"/>
    <property type="match status" value="1"/>
</dbReference>
<dbReference type="Gene3D" id="2.40.50.140">
    <property type="entry name" value="Nucleic acid-binding proteins"/>
    <property type="match status" value="1"/>
</dbReference>
<dbReference type="HAMAP" id="MF_00252">
    <property type="entry name" value="Lys_tRNA_synth_class2"/>
    <property type="match status" value="1"/>
</dbReference>
<dbReference type="InterPro" id="IPR004364">
    <property type="entry name" value="Aa-tRNA-synt_II"/>
</dbReference>
<dbReference type="InterPro" id="IPR006195">
    <property type="entry name" value="aa-tRNA-synth_II"/>
</dbReference>
<dbReference type="InterPro" id="IPR045864">
    <property type="entry name" value="aa-tRNA-synth_II/BPL/LPL"/>
</dbReference>
<dbReference type="InterPro" id="IPR002313">
    <property type="entry name" value="Lys-tRNA-ligase_II"/>
</dbReference>
<dbReference type="InterPro" id="IPR034762">
    <property type="entry name" value="Lys-tRNA-ligase_II_bac/euk"/>
</dbReference>
<dbReference type="InterPro" id="IPR044136">
    <property type="entry name" value="Lys-tRNA-ligase_II_N"/>
</dbReference>
<dbReference type="InterPro" id="IPR018149">
    <property type="entry name" value="Lys-tRNA-synth_II_C"/>
</dbReference>
<dbReference type="InterPro" id="IPR012340">
    <property type="entry name" value="NA-bd_OB-fold"/>
</dbReference>
<dbReference type="InterPro" id="IPR004365">
    <property type="entry name" value="NA-bd_OB_tRNA"/>
</dbReference>
<dbReference type="NCBIfam" id="TIGR00499">
    <property type="entry name" value="lysS_bact"/>
    <property type="match status" value="1"/>
</dbReference>
<dbReference type="NCBIfam" id="NF001756">
    <property type="entry name" value="PRK00484.1"/>
    <property type="match status" value="1"/>
</dbReference>
<dbReference type="PANTHER" id="PTHR42918:SF15">
    <property type="entry name" value="LYSINE--TRNA LIGASE, CHLOROPLASTIC_MITOCHONDRIAL"/>
    <property type="match status" value="1"/>
</dbReference>
<dbReference type="PANTHER" id="PTHR42918">
    <property type="entry name" value="LYSYL-TRNA SYNTHETASE"/>
    <property type="match status" value="1"/>
</dbReference>
<dbReference type="Pfam" id="PF00152">
    <property type="entry name" value="tRNA-synt_2"/>
    <property type="match status" value="1"/>
</dbReference>
<dbReference type="Pfam" id="PF01336">
    <property type="entry name" value="tRNA_anti-codon"/>
    <property type="match status" value="1"/>
</dbReference>
<dbReference type="PIRSF" id="PIRSF039101">
    <property type="entry name" value="LysRS2"/>
    <property type="match status" value="1"/>
</dbReference>
<dbReference type="PRINTS" id="PR00982">
    <property type="entry name" value="TRNASYNTHLYS"/>
</dbReference>
<dbReference type="SUPFAM" id="SSF55681">
    <property type="entry name" value="Class II aaRS and biotin synthetases"/>
    <property type="match status" value="1"/>
</dbReference>
<dbReference type="SUPFAM" id="SSF50249">
    <property type="entry name" value="Nucleic acid-binding proteins"/>
    <property type="match status" value="1"/>
</dbReference>
<dbReference type="PROSITE" id="PS50862">
    <property type="entry name" value="AA_TRNA_LIGASE_II"/>
    <property type="match status" value="1"/>
</dbReference>
<reference key="1">
    <citation type="journal article" date="2002" name="DNA Res.">
        <title>Complete genome structure of the thermophilic cyanobacterium Thermosynechococcus elongatus BP-1.</title>
        <authorList>
            <person name="Nakamura Y."/>
            <person name="Kaneko T."/>
            <person name="Sato S."/>
            <person name="Ikeuchi M."/>
            <person name="Katoh H."/>
            <person name="Sasamoto S."/>
            <person name="Watanabe A."/>
            <person name="Iriguchi M."/>
            <person name="Kawashima K."/>
            <person name="Kimura T."/>
            <person name="Kishida Y."/>
            <person name="Kiyokawa C."/>
            <person name="Kohara M."/>
            <person name="Matsumoto M."/>
            <person name="Matsuno A."/>
            <person name="Nakazaki N."/>
            <person name="Shimpo S."/>
            <person name="Sugimoto M."/>
            <person name="Takeuchi C."/>
            <person name="Yamada M."/>
            <person name="Tabata S."/>
        </authorList>
    </citation>
    <scope>NUCLEOTIDE SEQUENCE [LARGE SCALE GENOMIC DNA]</scope>
    <source>
        <strain>NIES-2133 / IAM M-273 / BP-1</strain>
    </source>
</reference>
<gene>
    <name evidence="1" type="primary">lysS</name>
    <name type="ordered locus">tll0212</name>
</gene>
<accession>Q8DMA9</accession>
<evidence type="ECO:0000255" key="1">
    <source>
        <dbReference type="HAMAP-Rule" id="MF_00252"/>
    </source>
</evidence>
<sequence>MADVGATGAEIRATRIEKAKTLQAQGMSPYAYRWERTHTAALLQDKYAHLAAGEAVGDRVSVAGRIMARRIFGKLAFFTLQDDSGTIQLYLDKQTISQTMGEAAFADLKHLTDVGDILGAVGTLKRTEKGELSVVVESYTMLTKSLLPLPDKWHGLTDVEKRYRQRYVDLIVNPQVRDTFRKRALITAAIRRYLNEQGFIEIETPVLQVEAGGAEARPFITYHNTLEMQLYLRIATELHLKRLIVGGFEKVYELGRIFRNEGISTKHNPEFTSIEVYQAYADYNDMMTLTEAIITTGAMEVLGTLKITYQGETIDLTPPWRRVTMHDAVLAATGIDFRQLGDLTAAKIAAQKVGVKDLDTCDTIGRVLNEVFEQIVEPTLIQPTFVLDYPVEISPLAKPHRSQPGLVERFELFIVGREHANSFSELTDPLDQRQRLEEQARRKAAGDLAAHSVDEDFLTALEHGMPPTGGLGIGIDRLVMLLTDSPSIRDVIAFPLLRPESAGGQV</sequence>
<proteinExistence type="inferred from homology"/>
<protein>
    <recommendedName>
        <fullName evidence="1">Lysine--tRNA ligase</fullName>
        <ecNumber evidence="1">6.1.1.6</ecNumber>
    </recommendedName>
    <alternativeName>
        <fullName evidence="1">Lysyl-tRNA synthetase</fullName>
        <shortName evidence="1">LysRS</shortName>
    </alternativeName>
</protein>
<feature type="chain" id="PRO_0000152693" description="Lysine--tRNA ligase">
    <location>
        <begin position="1"/>
        <end position="506"/>
    </location>
</feature>
<feature type="binding site" evidence="1">
    <location>
        <position position="411"/>
    </location>
    <ligand>
        <name>Mg(2+)</name>
        <dbReference type="ChEBI" id="CHEBI:18420"/>
        <label>1</label>
    </ligand>
</feature>
<feature type="binding site" evidence="1">
    <location>
        <position position="418"/>
    </location>
    <ligand>
        <name>Mg(2+)</name>
        <dbReference type="ChEBI" id="CHEBI:18420"/>
        <label>1</label>
    </ligand>
</feature>
<feature type="binding site" evidence="1">
    <location>
        <position position="418"/>
    </location>
    <ligand>
        <name>Mg(2+)</name>
        <dbReference type="ChEBI" id="CHEBI:18420"/>
        <label>2</label>
    </ligand>
</feature>
<name>SYK_THEVB</name>